<organism>
    <name type="scientific">Saccharopolyspora erythraea (strain ATCC 11635 / DSM 40517 / JCM 4748 / NBRC 13426 / NCIMB 8594 / NRRL 2338)</name>
    <dbReference type="NCBI Taxonomy" id="405948"/>
    <lineage>
        <taxon>Bacteria</taxon>
        <taxon>Bacillati</taxon>
        <taxon>Actinomycetota</taxon>
        <taxon>Actinomycetes</taxon>
        <taxon>Pseudonocardiales</taxon>
        <taxon>Pseudonocardiaceae</taxon>
        <taxon>Saccharopolyspora</taxon>
    </lineage>
</organism>
<protein>
    <recommendedName>
        <fullName evidence="1">Large ribosomal subunit protein bL33A</fullName>
    </recommendedName>
    <alternativeName>
        <fullName evidence="1">50S ribosomal protein L33 1</fullName>
    </alternativeName>
</protein>
<feature type="chain" id="PRO_0000356641" description="Large ribosomal subunit protein bL33A">
    <location>
        <begin position="1"/>
        <end position="54"/>
    </location>
</feature>
<gene>
    <name evidence="1" type="primary">rpmG1</name>
    <name type="ordered locus">SACE_0753</name>
</gene>
<evidence type="ECO:0000255" key="1">
    <source>
        <dbReference type="HAMAP-Rule" id="MF_00294"/>
    </source>
</evidence>
<keyword id="KW-1185">Reference proteome</keyword>
<keyword id="KW-0687">Ribonucleoprotein</keyword>
<keyword id="KW-0689">Ribosomal protein</keyword>
<name>RL331_SACEN</name>
<reference key="1">
    <citation type="journal article" date="2007" name="Nat. Biotechnol.">
        <title>Complete genome sequence of the erythromycin-producing bacterium Saccharopolyspora erythraea NRRL23338.</title>
        <authorList>
            <person name="Oliynyk M."/>
            <person name="Samborskyy M."/>
            <person name="Lester J.B."/>
            <person name="Mironenko T."/>
            <person name="Scott N."/>
            <person name="Dickens S."/>
            <person name="Haydock S.F."/>
            <person name="Leadlay P.F."/>
        </authorList>
    </citation>
    <scope>NUCLEOTIDE SEQUENCE [LARGE SCALE GENOMIC DNA]</scope>
    <source>
        <strain>ATCC 11635 / DSM 40517 / JCM 4748 / NBRC 13426 / NCIMB 8594 / NRRL 2338</strain>
    </source>
</reference>
<accession>A4F7S0</accession>
<proteinExistence type="inferred from homology"/>
<comment type="similarity">
    <text evidence="1">Belongs to the bacterial ribosomal protein bL33 family.</text>
</comment>
<dbReference type="EMBL" id="AM420293">
    <property type="protein sequence ID" value="CAM00094.1"/>
    <property type="molecule type" value="Genomic_DNA"/>
</dbReference>
<dbReference type="RefSeq" id="WP_009950115.1">
    <property type="nucleotide sequence ID" value="NC_009142.1"/>
</dbReference>
<dbReference type="SMR" id="A4F7S0"/>
<dbReference type="STRING" id="405948.SACE_0753"/>
<dbReference type="KEGG" id="sen:SACE_0753"/>
<dbReference type="eggNOG" id="COG0267">
    <property type="taxonomic scope" value="Bacteria"/>
</dbReference>
<dbReference type="HOGENOM" id="CLU_190949_1_1_11"/>
<dbReference type="OrthoDB" id="21586at2"/>
<dbReference type="Proteomes" id="UP000006728">
    <property type="component" value="Chromosome"/>
</dbReference>
<dbReference type="GO" id="GO:0022625">
    <property type="term" value="C:cytosolic large ribosomal subunit"/>
    <property type="evidence" value="ECO:0007669"/>
    <property type="project" value="TreeGrafter"/>
</dbReference>
<dbReference type="GO" id="GO:0003735">
    <property type="term" value="F:structural constituent of ribosome"/>
    <property type="evidence" value="ECO:0007669"/>
    <property type="project" value="InterPro"/>
</dbReference>
<dbReference type="GO" id="GO:0006412">
    <property type="term" value="P:translation"/>
    <property type="evidence" value="ECO:0007669"/>
    <property type="project" value="UniProtKB-UniRule"/>
</dbReference>
<dbReference type="FunFam" id="2.20.28.120:FF:000002">
    <property type="entry name" value="50S ribosomal protein L33"/>
    <property type="match status" value="1"/>
</dbReference>
<dbReference type="Gene3D" id="2.20.28.120">
    <property type="entry name" value="Ribosomal protein L33"/>
    <property type="match status" value="1"/>
</dbReference>
<dbReference type="HAMAP" id="MF_00294">
    <property type="entry name" value="Ribosomal_bL33"/>
    <property type="match status" value="1"/>
</dbReference>
<dbReference type="InterPro" id="IPR001705">
    <property type="entry name" value="Ribosomal_bL33"/>
</dbReference>
<dbReference type="InterPro" id="IPR038584">
    <property type="entry name" value="Ribosomal_bL33_sf"/>
</dbReference>
<dbReference type="InterPro" id="IPR011332">
    <property type="entry name" value="Ribosomal_zn-bd"/>
</dbReference>
<dbReference type="NCBIfam" id="NF001860">
    <property type="entry name" value="PRK00595.1"/>
    <property type="match status" value="1"/>
</dbReference>
<dbReference type="NCBIfam" id="TIGR01023">
    <property type="entry name" value="rpmG_bact"/>
    <property type="match status" value="1"/>
</dbReference>
<dbReference type="PANTHER" id="PTHR15238">
    <property type="entry name" value="54S RIBOSOMAL PROTEIN L39, MITOCHONDRIAL"/>
    <property type="match status" value="1"/>
</dbReference>
<dbReference type="PANTHER" id="PTHR15238:SF1">
    <property type="entry name" value="LARGE RIBOSOMAL SUBUNIT PROTEIN BL33M"/>
    <property type="match status" value="1"/>
</dbReference>
<dbReference type="Pfam" id="PF00471">
    <property type="entry name" value="Ribosomal_L33"/>
    <property type="match status" value="1"/>
</dbReference>
<dbReference type="SUPFAM" id="SSF57829">
    <property type="entry name" value="Zn-binding ribosomal proteins"/>
    <property type="match status" value="1"/>
</dbReference>
<sequence>MASNDVRPVIKLRSTAGTGHTYVTRKNRRNDPDRMRLRKYDPVIRAHVEYREER</sequence>